<reference key="1">
    <citation type="journal article" date="2011" name="J. Bacteriol.">
        <title>Genome of Ochrobactrum anthropi ATCC 49188 T, a versatile opportunistic pathogen and symbiont of several eukaryotic hosts.</title>
        <authorList>
            <person name="Chain P.S."/>
            <person name="Lang D.M."/>
            <person name="Comerci D.J."/>
            <person name="Malfatti S.A."/>
            <person name="Vergez L.M."/>
            <person name="Shin M."/>
            <person name="Ugalde R.A."/>
            <person name="Garcia E."/>
            <person name="Tolmasky M.E."/>
        </authorList>
    </citation>
    <scope>NUCLEOTIDE SEQUENCE [LARGE SCALE GENOMIC DNA]</scope>
    <source>
        <strain>ATCC 49188 / DSM 6882 / CCUG 24695 / JCM 21032 / LMG 3331 / NBRC 15819 / NCTC 12168 / Alc 37</strain>
    </source>
</reference>
<evidence type="ECO:0000255" key="1">
    <source>
        <dbReference type="HAMAP-Rule" id="MF_00149"/>
    </source>
</evidence>
<evidence type="ECO:0000256" key="2">
    <source>
        <dbReference type="SAM" id="MobiDB-lite"/>
    </source>
</evidence>
<name>MUTL_BRUA4</name>
<proteinExistence type="inferred from homology"/>
<gene>
    <name evidence="1" type="primary">mutL</name>
    <name type="ordered locus">Oant_3049</name>
</gene>
<organism>
    <name type="scientific">Brucella anthropi (strain ATCC 49188 / DSM 6882 / CCUG 24695 / JCM 21032 / LMG 3331 / NBRC 15819 / NCTC 12168 / Alc 37)</name>
    <name type="common">Ochrobactrum anthropi</name>
    <dbReference type="NCBI Taxonomy" id="439375"/>
    <lineage>
        <taxon>Bacteria</taxon>
        <taxon>Pseudomonadati</taxon>
        <taxon>Pseudomonadota</taxon>
        <taxon>Alphaproteobacteria</taxon>
        <taxon>Hyphomicrobiales</taxon>
        <taxon>Brucellaceae</taxon>
        <taxon>Brucella/Ochrobactrum group</taxon>
        <taxon>Brucella</taxon>
    </lineage>
</organism>
<keyword id="KW-0227">DNA damage</keyword>
<keyword id="KW-0234">DNA repair</keyword>
<keyword id="KW-1185">Reference proteome</keyword>
<accession>A6X3F3</accession>
<protein>
    <recommendedName>
        <fullName evidence="1">DNA mismatch repair protein MutL</fullName>
    </recommendedName>
</protein>
<dbReference type="EMBL" id="CP000759">
    <property type="protein sequence ID" value="ABS15757.1"/>
    <property type="molecule type" value="Genomic_DNA"/>
</dbReference>
<dbReference type="RefSeq" id="WP_011982765.1">
    <property type="nucleotide sequence ID" value="NC_009668.1"/>
</dbReference>
<dbReference type="SMR" id="A6X3F3"/>
<dbReference type="STRING" id="439375.Oant_3049"/>
<dbReference type="KEGG" id="oan:Oant_3049"/>
<dbReference type="PATRIC" id="fig|439375.7.peg.3200"/>
<dbReference type="eggNOG" id="COG0323">
    <property type="taxonomic scope" value="Bacteria"/>
</dbReference>
<dbReference type="HOGENOM" id="CLU_004131_4_2_5"/>
<dbReference type="PhylomeDB" id="A6X3F3"/>
<dbReference type="Proteomes" id="UP000002301">
    <property type="component" value="Chromosome 2"/>
</dbReference>
<dbReference type="GO" id="GO:0032300">
    <property type="term" value="C:mismatch repair complex"/>
    <property type="evidence" value="ECO:0007669"/>
    <property type="project" value="InterPro"/>
</dbReference>
<dbReference type="GO" id="GO:0005524">
    <property type="term" value="F:ATP binding"/>
    <property type="evidence" value="ECO:0007669"/>
    <property type="project" value="InterPro"/>
</dbReference>
<dbReference type="GO" id="GO:0016887">
    <property type="term" value="F:ATP hydrolysis activity"/>
    <property type="evidence" value="ECO:0007669"/>
    <property type="project" value="InterPro"/>
</dbReference>
<dbReference type="GO" id="GO:0140664">
    <property type="term" value="F:ATP-dependent DNA damage sensor activity"/>
    <property type="evidence" value="ECO:0007669"/>
    <property type="project" value="InterPro"/>
</dbReference>
<dbReference type="GO" id="GO:0030983">
    <property type="term" value="F:mismatched DNA binding"/>
    <property type="evidence" value="ECO:0007669"/>
    <property type="project" value="InterPro"/>
</dbReference>
<dbReference type="GO" id="GO:0006298">
    <property type="term" value="P:mismatch repair"/>
    <property type="evidence" value="ECO:0007669"/>
    <property type="project" value="UniProtKB-UniRule"/>
</dbReference>
<dbReference type="CDD" id="cd16926">
    <property type="entry name" value="HATPase_MutL-MLH-PMS-like"/>
    <property type="match status" value="1"/>
</dbReference>
<dbReference type="CDD" id="cd03482">
    <property type="entry name" value="MutL_Trans_MutL"/>
    <property type="match status" value="1"/>
</dbReference>
<dbReference type="FunFam" id="3.30.565.10:FF:000003">
    <property type="entry name" value="DNA mismatch repair endonuclease MutL"/>
    <property type="match status" value="1"/>
</dbReference>
<dbReference type="Gene3D" id="3.30.230.10">
    <property type="match status" value="1"/>
</dbReference>
<dbReference type="Gene3D" id="3.30.565.10">
    <property type="entry name" value="Histidine kinase-like ATPase, C-terminal domain"/>
    <property type="match status" value="1"/>
</dbReference>
<dbReference type="Gene3D" id="3.30.1540.20">
    <property type="entry name" value="MutL, C-terminal domain, dimerisation subdomain"/>
    <property type="match status" value="1"/>
</dbReference>
<dbReference type="Gene3D" id="3.30.1370.100">
    <property type="entry name" value="MutL, C-terminal domain, regulatory subdomain"/>
    <property type="match status" value="1"/>
</dbReference>
<dbReference type="HAMAP" id="MF_00149">
    <property type="entry name" value="DNA_mis_repair"/>
    <property type="match status" value="1"/>
</dbReference>
<dbReference type="InterPro" id="IPR014762">
    <property type="entry name" value="DNA_mismatch_repair_CS"/>
</dbReference>
<dbReference type="InterPro" id="IPR020667">
    <property type="entry name" value="DNA_mismatch_repair_MutL"/>
</dbReference>
<dbReference type="InterPro" id="IPR013507">
    <property type="entry name" value="DNA_mismatch_S5_2-like"/>
</dbReference>
<dbReference type="InterPro" id="IPR036890">
    <property type="entry name" value="HATPase_C_sf"/>
</dbReference>
<dbReference type="InterPro" id="IPR002099">
    <property type="entry name" value="MutL/Mlh/PMS"/>
</dbReference>
<dbReference type="InterPro" id="IPR038973">
    <property type="entry name" value="MutL/Mlh/Pms-like"/>
</dbReference>
<dbReference type="InterPro" id="IPR014790">
    <property type="entry name" value="MutL_C"/>
</dbReference>
<dbReference type="InterPro" id="IPR042120">
    <property type="entry name" value="MutL_C_dimsub"/>
</dbReference>
<dbReference type="InterPro" id="IPR042121">
    <property type="entry name" value="MutL_C_regsub"/>
</dbReference>
<dbReference type="InterPro" id="IPR037198">
    <property type="entry name" value="MutL_C_sf"/>
</dbReference>
<dbReference type="InterPro" id="IPR020568">
    <property type="entry name" value="Ribosomal_Su5_D2-typ_SF"/>
</dbReference>
<dbReference type="InterPro" id="IPR014721">
    <property type="entry name" value="Ribsml_uS5_D2-typ_fold_subgr"/>
</dbReference>
<dbReference type="NCBIfam" id="TIGR00585">
    <property type="entry name" value="mutl"/>
    <property type="match status" value="1"/>
</dbReference>
<dbReference type="NCBIfam" id="NF000953">
    <property type="entry name" value="PRK00095.2-4"/>
    <property type="match status" value="1"/>
</dbReference>
<dbReference type="PANTHER" id="PTHR10073">
    <property type="entry name" value="DNA MISMATCH REPAIR PROTEIN MLH, PMS, MUTL"/>
    <property type="match status" value="1"/>
</dbReference>
<dbReference type="PANTHER" id="PTHR10073:SF12">
    <property type="entry name" value="DNA MISMATCH REPAIR PROTEIN MLH1"/>
    <property type="match status" value="1"/>
</dbReference>
<dbReference type="Pfam" id="PF01119">
    <property type="entry name" value="DNA_mis_repair"/>
    <property type="match status" value="1"/>
</dbReference>
<dbReference type="Pfam" id="PF13589">
    <property type="entry name" value="HATPase_c_3"/>
    <property type="match status" value="1"/>
</dbReference>
<dbReference type="Pfam" id="PF08676">
    <property type="entry name" value="MutL_C"/>
    <property type="match status" value="1"/>
</dbReference>
<dbReference type="SMART" id="SM01340">
    <property type="entry name" value="DNA_mis_repair"/>
    <property type="match status" value="1"/>
</dbReference>
<dbReference type="SMART" id="SM00853">
    <property type="entry name" value="MutL_C"/>
    <property type="match status" value="1"/>
</dbReference>
<dbReference type="SUPFAM" id="SSF55874">
    <property type="entry name" value="ATPase domain of HSP90 chaperone/DNA topoisomerase II/histidine kinase"/>
    <property type="match status" value="1"/>
</dbReference>
<dbReference type="SUPFAM" id="SSF118116">
    <property type="entry name" value="DNA mismatch repair protein MutL"/>
    <property type="match status" value="1"/>
</dbReference>
<dbReference type="SUPFAM" id="SSF54211">
    <property type="entry name" value="Ribosomal protein S5 domain 2-like"/>
    <property type="match status" value="1"/>
</dbReference>
<dbReference type="PROSITE" id="PS00058">
    <property type="entry name" value="DNA_MISMATCH_REPAIR_1"/>
    <property type="match status" value="1"/>
</dbReference>
<feature type="chain" id="PRO_1000010051" description="DNA mismatch repair protein MutL">
    <location>
        <begin position="1"/>
        <end position="626"/>
    </location>
</feature>
<feature type="region of interest" description="Disordered" evidence="2">
    <location>
        <begin position="352"/>
        <end position="399"/>
    </location>
</feature>
<feature type="compositionally biased region" description="Polar residues" evidence="2">
    <location>
        <begin position="378"/>
        <end position="387"/>
    </location>
</feature>
<comment type="function">
    <text evidence="1">This protein is involved in the repair of mismatches in DNA. It is required for dam-dependent methyl-directed DNA mismatch repair. May act as a 'molecular matchmaker', a protein that promotes the formation of a stable complex between two or more DNA-binding proteins in an ATP-dependent manner without itself being part of a final effector complex.</text>
</comment>
<comment type="similarity">
    <text evidence="1">Belongs to the DNA mismatch repair MutL/HexB family.</text>
</comment>
<sequence length="626" mass="67155">MPIRHLSETIINQIAAGEVIERPASVIKELVENAIDAGATRIEVVTGGGGKTLLRVTDNGSGIPVDELPLAVSRHCTSKLSDDVHDIRALGFRGEALPSIGSVAKLTLKSRPQDADSGFEVSVSGGHLDGPRPSALNRGTIAEVRDLFFATPARLKFMKTDRAEASAITDVVKRIAIAFPHVRFSLAGTDRTPLELAATGSGAEATLERINQVLGKEFGENALAIDAERDGVRLAGFVGIPSHNRGNALHQFAYVNGRPVRDKQLFGALRGAYADVMARDRHPVAVLFLTLDPAFVDVNVHPAKADVRFRDPGLVRGLIVGAIKQALAQSGIRPATSGADAMLQAFRAEGFQPPSPSFTSRPSSAGYASGSWHPAVSSPRTEWSPQTAHPAHRPLDLGAAPSFQESDQATLATVNVLAADARATRDEAPVELQQKPLGAARAQIHANYIVSQTEDSLVIVDQHAAHERLVYEALKNALHSRPISGQMLLIPEIVDLPEEDAERLATHAETLARFGLGIEQFGPGAIAVRETPAMLGEMNVQQLIRDLSDEIAEHDTSEGLKAMLNHVAATMACHGSVRSGRRLKPEEMNALLREMEATPGSGTCNHGRPTYIELKLTDIERLFGRR</sequence>